<reference key="1">
    <citation type="journal article" date="1999" name="Nature">
        <title>Sequence and analysis of chromosome 2 of the plant Arabidopsis thaliana.</title>
        <authorList>
            <person name="Lin X."/>
            <person name="Kaul S."/>
            <person name="Rounsley S.D."/>
            <person name="Shea T.P."/>
            <person name="Benito M.-I."/>
            <person name="Town C.D."/>
            <person name="Fujii C.Y."/>
            <person name="Mason T.M."/>
            <person name="Bowman C.L."/>
            <person name="Barnstead M.E."/>
            <person name="Feldblyum T.V."/>
            <person name="Buell C.R."/>
            <person name="Ketchum K.A."/>
            <person name="Lee J.J."/>
            <person name="Ronning C.M."/>
            <person name="Koo H.L."/>
            <person name="Moffat K.S."/>
            <person name="Cronin L.A."/>
            <person name="Shen M."/>
            <person name="Pai G."/>
            <person name="Van Aken S."/>
            <person name="Umayam L."/>
            <person name="Tallon L.J."/>
            <person name="Gill J.E."/>
            <person name="Adams M.D."/>
            <person name="Carrera A.J."/>
            <person name="Creasy T.H."/>
            <person name="Goodman H.M."/>
            <person name="Somerville C.R."/>
            <person name="Copenhaver G.P."/>
            <person name="Preuss D."/>
            <person name="Nierman W.C."/>
            <person name="White O."/>
            <person name="Eisen J.A."/>
            <person name="Salzberg S.L."/>
            <person name="Fraser C.M."/>
            <person name="Venter J.C."/>
        </authorList>
    </citation>
    <scope>NUCLEOTIDE SEQUENCE [LARGE SCALE GENOMIC DNA]</scope>
    <source>
        <strain>cv. Columbia</strain>
    </source>
</reference>
<reference key="2">
    <citation type="journal article" date="2017" name="Plant J.">
        <title>Araport11: a complete reannotation of the Arabidopsis thaliana reference genome.</title>
        <authorList>
            <person name="Cheng C.Y."/>
            <person name="Krishnakumar V."/>
            <person name="Chan A.P."/>
            <person name="Thibaud-Nissen F."/>
            <person name="Schobel S."/>
            <person name="Town C.D."/>
        </authorList>
    </citation>
    <scope>GENOME REANNOTATION</scope>
    <source>
        <strain>cv. Columbia</strain>
    </source>
</reference>
<reference key="3">
    <citation type="journal article" date="2003" name="Science">
        <title>Empirical analysis of transcriptional activity in the Arabidopsis genome.</title>
        <authorList>
            <person name="Yamada K."/>
            <person name="Lim J."/>
            <person name="Dale J.M."/>
            <person name="Chen H."/>
            <person name="Shinn P."/>
            <person name="Palm C.J."/>
            <person name="Southwick A.M."/>
            <person name="Wu H.C."/>
            <person name="Kim C.J."/>
            <person name="Nguyen M."/>
            <person name="Pham P.K."/>
            <person name="Cheuk R.F."/>
            <person name="Karlin-Newmann G."/>
            <person name="Liu S.X."/>
            <person name="Lam B."/>
            <person name="Sakano H."/>
            <person name="Wu T."/>
            <person name="Yu G."/>
            <person name="Miranda M."/>
            <person name="Quach H.L."/>
            <person name="Tripp M."/>
            <person name="Chang C.H."/>
            <person name="Lee J.M."/>
            <person name="Toriumi M.J."/>
            <person name="Chan M.M."/>
            <person name="Tang C.C."/>
            <person name="Onodera C.S."/>
            <person name="Deng J.M."/>
            <person name="Akiyama K."/>
            <person name="Ansari Y."/>
            <person name="Arakawa T."/>
            <person name="Banh J."/>
            <person name="Banno F."/>
            <person name="Bowser L."/>
            <person name="Brooks S.Y."/>
            <person name="Carninci P."/>
            <person name="Chao Q."/>
            <person name="Choy N."/>
            <person name="Enju A."/>
            <person name="Goldsmith A.D."/>
            <person name="Gurjal M."/>
            <person name="Hansen N.F."/>
            <person name="Hayashizaki Y."/>
            <person name="Johnson-Hopson C."/>
            <person name="Hsuan V.W."/>
            <person name="Iida K."/>
            <person name="Karnes M."/>
            <person name="Khan S."/>
            <person name="Koesema E."/>
            <person name="Ishida J."/>
            <person name="Jiang P.X."/>
            <person name="Jones T."/>
            <person name="Kawai J."/>
            <person name="Kamiya A."/>
            <person name="Meyers C."/>
            <person name="Nakajima M."/>
            <person name="Narusaka M."/>
            <person name="Seki M."/>
            <person name="Sakurai T."/>
            <person name="Satou M."/>
            <person name="Tamse R."/>
            <person name="Vaysberg M."/>
            <person name="Wallender E.K."/>
            <person name="Wong C."/>
            <person name="Yamamura Y."/>
            <person name="Yuan S."/>
            <person name="Shinozaki K."/>
            <person name="Davis R.W."/>
            <person name="Theologis A."/>
            <person name="Ecker J.R."/>
        </authorList>
    </citation>
    <scope>NUCLEOTIDE SEQUENCE [LARGE SCALE MRNA]</scope>
    <source>
        <strain>cv. Columbia</strain>
    </source>
</reference>
<reference key="4">
    <citation type="journal article" date="2008" name="Plant Cell">
        <title>The Arabidopsis onset of leaf death5 mutation of quinolinate synthase affects nicotinamide adenine dinucleotide biosynthesis and causes early ageing.</title>
        <authorList>
            <person name="Schippers J.H."/>
            <person name="Nunes-Nesi A."/>
            <person name="Apetrei R."/>
            <person name="Hille J."/>
            <person name="Fernie A.R."/>
            <person name="Dijkwel P.P."/>
        </authorList>
    </citation>
    <scope>IDENTIFICATION</scope>
    <scope>INDUCTION</scope>
</reference>
<sequence>MEPKENGSELGQKIIDGPTNPMVTPLLNDLYQFTMAYAYWKAGKHNERSVFDLYFRKNPFGGEYTVFAGLEECVKFLANFKLTDEEIDFVQECLPGSEEAFCDYLRGLDCSDVEVYAIPEGSVVFPKVPLMRVEGPVGVVQLLETPFLNLVNFASLVATNAARHRFVAGKSKSLLEFGARRAQGPDGAISASKYCYLGGFDATSNVAAGKLFGIPLRGTHSHAYVSSFMSTDEIVDKVLRSADGKTTCEDFVSHVQTWLKKIQYSPSLSGIFSETNQSELAAFTSYALAFPKTFLALVDTYDVMKSGIPNFCAVALALNDFGYKALGIRLDSGDLAYLSREARNFFCTVERELKVPGFGKMVVTASNDLNEETIDALNKQGHEVDAFGIGTYLVTCYSQAALGCVFKLVEINNQPRIKLSEDVTKVSIPCKKRSYRLYGKEGYPLVDIMTGENEPPPKVGERLLCRHPFNESKRAYVVPQRVEELLKCYWRGSADEAREVLPPLKEIRDRCIKQLENMRPDHMRRLNPTPYKVSVSAKLYDFIHFLWLNEAPVGELQ</sequence>
<gene>
    <name evidence="5" type="primary">NAPRT2</name>
    <name evidence="7" type="ordered locus">At2g23420</name>
    <name evidence="8" type="ORF">F26B6.7</name>
</gene>
<accession>Q84WV8</accession>
<accession>O80459</accession>
<proteinExistence type="evidence at transcript level"/>
<evidence type="ECO:0000250" key="1">
    <source>
        <dbReference type="UniProtKB" id="P22253"/>
    </source>
</evidence>
<evidence type="ECO:0000250" key="2">
    <source>
        <dbReference type="UniProtKB" id="Q6XQN6"/>
    </source>
</evidence>
<evidence type="ECO:0000250" key="3">
    <source>
        <dbReference type="UniProtKB" id="Q9HJ28"/>
    </source>
</evidence>
<evidence type="ECO:0000269" key="4">
    <source>
    </source>
</evidence>
<evidence type="ECO:0000303" key="5">
    <source>
    </source>
</evidence>
<evidence type="ECO:0000305" key="6"/>
<evidence type="ECO:0000312" key="7">
    <source>
        <dbReference type="Araport" id="AT2G23420"/>
    </source>
</evidence>
<evidence type="ECO:0000312" key="8">
    <source>
        <dbReference type="EMBL" id="AAC23757.1"/>
    </source>
</evidence>
<evidence type="ECO:0000312" key="9">
    <source>
        <dbReference type="EMBL" id="AAN71931.1"/>
    </source>
</evidence>
<protein>
    <recommendedName>
        <fullName evidence="5">Nicotinate phosphoribosyltransferase 2</fullName>
        <ecNumber evidence="2">6.3.4.21</ecNumber>
    </recommendedName>
</protein>
<comment type="function">
    <text evidence="2">Catalyzes the first step in the biosynthesis of NAD from nicotinic acid, the ATP-dependent synthesis of beta-nicotinate D-ribonucleotide from nicotinate and 5-phospho-D-ribose 1-phosphate. Helps prevent cellular oxidative stress via its role in NAD biosynthesis.</text>
</comment>
<comment type="catalytic activity">
    <reaction evidence="2">
        <text>nicotinate + 5-phospho-alpha-D-ribose 1-diphosphate + ATP + H2O = nicotinate beta-D-ribonucleotide + ADP + phosphate + diphosphate</text>
        <dbReference type="Rhea" id="RHEA:36163"/>
        <dbReference type="ChEBI" id="CHEBI:15377"/>
        <dbReference type="ChEBI" id="CHEBI:30616"/>
        <dbReference type="ChEBI" id="CHEBI:32544"/>
        <dbReference type="ChEBI" id="CHEBI:33019"/>
        <dbReference type="ChEBI" id="CHEBI:43474"/>
        <dbReference type="ChEBI" id="CHEBI:57502"/>
        <dbReference type="ChEBI" id="CHEBI:58017"/>
        <dbReference type="ChEBI" id="CHEBI:456216"/>
        <dbReference type="EC" id="6.3.4.21"/>
    </reaction>
</comment>
<comment type="cofactor">
    <cofactor evidence="2">
        <name>Mg(2+)</name>
        <dbReference type="ChEBI" id="CHEBI:18420"/>
    </cofactor>
    <cofactor evidence="2">
        <name>Mn(2+)</name>
        <dbReference type="ChEBI" id="CHEBI:29035"/>
    </cofactor>
    <text evidence="2">Activity is highest with Mn(2+).</text>
</comment>
<comment type="pathway">
    <text evidence="2">Cofactor biosynthesis; NAD(+) biosynthesis; nicotinate D-ribonucleotide from nicotinate: step 1/1.</text>
</comment>
<comment type="induction">
    <text evidence="4">Up-regulated in the quinolinate synthase mutant old5 causing increased NAD steady state levels.</text>
</comment>
<comment type="PTM">
    <text evidence="1">Transiently phosphorylated on a His residue during the reaction cycle. Phosphorylation strongly increases the affinity for substrates and increases the rate of nicotinate D-ribonucleotide production. Dephosphorylation regenerates the low-affinity form of the enzyme, leading to product release.</text>
</comment>
<comment type="similarity">
    <text evidence="6">Belongs to the NAPRTase family.</text>
</comment>
<comment type="sequence caution" evidence="6">
    <conflict type="erroneous gene model prediction">
        <sequence resource="EMBL-CDS" id="AAC23757"/>
    </conflict>
</comment>
<organism evidence="9">
    <name type="scientific">Arabidopsis thaliana</name>
    <name type="common">Mouse-ear cress</name>
    <dbReference type="NCBI Taxonomy" id="3702"/>
    <lineage>
        <taxon>Eukaryota</taxon>
        <taxon>Viridiplantae</taxon>
        <taxon>Streptophyta</taxon>
        <taxon>Embryophyta</taxon>
        <taxon>Tracheophyta</taxon>
        <taxon>Spermatophyta</taxon>
        <taxon>Magnoliopsida</taxon>
        <taxon>eudicotyledons</taxon>
        <taxon>Gunneridae</taxon>
        <taxon>Pentapetalae</taxon>
        <taxon>rosids</taxon>
        <taxon>malvids</taxon>
        <taxon>Brassicales</taxon>
        <taxon>Brassicaceae</taxon>
        <taxon>Camelineae</taxon>
        <taxon>Arabidopsis</taxon>
    </lineage>
</organism>
<name>NPRT2_ARATH</name>
<dbReference type="EC" id="6.3.4.21" evidence="2"/>
<dbReference type="EMBL" id="AC003040">
    <property type="protein sequence ID" value="AAC23757.1"/>
    <property type="status" value="ALT_SEQ"/>
    <property type="molecule type" value="Genomic_DNA"/>
</dbReference>
<dbReference type="EMBL" id="CP002685">
    <property type="protein sequence ID" value="AEC07453.1"/>
    <property type="molecule type" value="Genomic_DNA"/>
</dbReference>
<dbReference type="EMBL" id="BT001932">
    <property type="protein sequence ID" value="AAN71931.1"/>
    <property type="molecule type" value="mRNA"/>
</dbReference>
<dbReference type="PIR" id="T01131">
    <property type="entry name" value="T01131"/>
</dbReference>
<dbReference type="RefSeq" id="NP_179923.2">
    <property type="nucleotide sequence ID" value="NM_127906.6"/>
</dbReference>
<dbReference type="SMR" id="Q84WV8"/>
<dbReference type="FunCoup" id="Q84WV8">
    <property type="interactions" value="1578"/>
</dbReference>
<dbReference type="IntAct" id="Q84WV8">
    <property type="interactions" value="37"/>
</dbReference>
<dbReference type="STRING" id="3702.Q84WV8"/>
<dbReference type="iPTMnet" id="Q84WV8"/>
<dbReference type="PaxDb" id="3702-AT2G23420.1"/>
<dbReference type="ProteomicsDB" id="250596"/>
<dbReference type="EnsemblPlants" id="AT2G23420.1">
    <property type="protein sequence ID" value="AT2G23420.1"/>
    <property type="gene ID" value="AT2G23420"/>
</dbReference>
<dbReference type="GeneID" id="816874"/>
<dbReference type="Gramene" id="AT2G23420.1">
    <property type="protein sequence ID" value="AT2G23420.1"/>
    <property type="gene ID" value="AT2G23420"/>
</dbReference>
<dbReference type="KEGG" id="ath:AT2G23420"/>
<dbReference type="Araport" id="AT2G23420"/>
<dbReference type="TAIR" id="AT2G23420">
    <property type="gene designation" value="NAPRT2"/>
</dbReference>
<dbReference type="eggNOG" id="KOG2511">
    <property type="taxonomic scope" value="Eukaryota"/>
</dbReference>
<dbReference type="HOGENOM" id="CLU_025154_1_0_1"/>
<dbReference type="InParanoid" id="Q84WV8"/>
<dbReference type="OMA" id="VYFPGSP"/>
<dbReference type="OrthoDB" id="193380at2759"/>
<dbReference type="PhylomeDB" id="Q84WV8"/>
<dbReference type="BioCyc" id="ARA:AT2G23420-MONOMER"/>
<dbReference type="UniPathway" id="UPA00253">
    <property type="reaction ID" value="UER00457"/>
</dbReference>
<dbReference type="PRO" id="PR:Q84WV8"/>
<dbReference type="Proteomes" id="UP000006548">
    <property type="component" value="Chromosome 2"/>
</dbReference>
<dbReference type="ExpressionAtlas" id="Q84WV8">
    <property type="expression patterns" value="baseline and differential"/>
</dbReference>
<dbReference type="GO" id="GO:0016757">
    <property type="term" value="F:glycosyltransferase activity"/>
    <property type="evidence" value="ECO:0007669"/>
    <property type="project" value="UniProtKB-KW"/>
</dbReference>
<dbReference type="GO" id="GO:0046872">
    <property type="term" value="F:metal ion binding"/>
    <property type="evidence" value="ECO:0007669"/>
    <property type="project" value="UniProtKB-KW"/>
</dbReference>
<dbReference type="GO" id="GO:0004516">
    <property type="term" value="F:nicotinate phosphoribosyltransferase activity"/>
    <property type="evidence" value="ECO:0007669"/>
    <property type="project" value="UniProtKB-EC"/>
</dbReference>
<dbReference type="GO" id="GO:0009435">
    <property type="term" value="P:NAD biosynthetic process"/>
    <property type="evidence" value="ECO:0007669"/>
    <property type="project" value="UniProtKB-UniPathway"/>
</dbReference>
<dbReference type="CDD" id="cd01570">
    <property type="entry name" value="NAPRTase_A"/>
    <property type="match status" value="1"/>
</dbReference>
<dbReference type="FunFam" id="3.20.140.10:FF:000002">
    <property type="entry name" value="Nicotinate phosphoribosyltransferase"/>
    <property type="match status" value="1"/>
</dbReference>
<dbReference type="FunFam" id="3.20.140.10:FF:000006">
    <property type="entry name" value="Nicotinate phosphoribosyltransferase"/>
    <property type="match status" value="1"/>
</dbReference>
<dbReference type="FunFam" id="3.20.20.70:FF:000155">
    <property type="entry name" value="Nicotinate phosphoribosyltransferase"/>
    <property type="match status" value="1"/>
</dbReference>
<dbReference type="FunFam" id="3.20.20.70:FF:000227">
    <property type="entry name" value="Nicotinate phosphoribosyltransferase"/>
    <property type="match status" value="1"/>
</dbReference>
<dbReference type="Gene3D" id="3.20.20.70">
    <property type="entry name" value="Aldolase class I"/>
    <property type="match status" value="1"/>
</dbReference>
<dbReference type="Gene3D" id="3.20.140.10">
    <property type="entry name" value="nicotinate phosphoribosyltransferase"/>
    <property type="match status" value="2"/>
</dbReference>
<dbReference type="InterPro" id="IPR013785">
    <property type="entry name" value="Aldolase_TIM"/>
</dbReference>
<dbReference type="InterPro" id="IPR041525">
    <property type="entry name" value="N/Namide_PRibTrfase"/>
</dbReference>
<dbReference type="InterPro" id="IPR041619">
    <property type="entry name" value="NAPRTase_C"/>
</dbReference>
<dbReference type="InterPro" id="IPR040727">
    <property type="entry name" value="NAPRTase_N"/>
</dbReference>
<dbReference type="InterPro" id="IPR007229">
    <property type="entry name" value="Nic_PRibTrfase-Fam"/>
</dbReference>
<dbReference type="InterPro" id="IPR006405">
    <property type="entry name" value="Nic_PRibTrfase_pncB"/>
</dbReference>
<dbReference type="InterPro" id="IPR036068">
    <property type="entry name" value="Nicotinate_pribotase-like_C"/>
</dbReference>
<dbReference type="NCBIfam" id="TIGR01513">
    <property type="entry name" value="NAPRTase_put"/>
    <property type="match status" value="1"/>
</dbReference>
<dbReference type="PANTHER" id="PTHR11098">
    <property type="entry name" value="NICOTINATE PHOSPHORIBOSYLTRANSFERASE"/>
    <property type="match status" value="1"/>
</dbReference>
<dbReference type="PANTHER" id="PTHR11098:SF1">
    <property type="entry name" value="NICOTINATE PHOSPHORIBOSYLTRANSFERASE"/>
    <property type="match status" value="1"/>
</dbReference>
<dbReference type="Pfam" id="PF04095">
    <property type="entry name" value="NAPRTase"/>
    <property type="match status" value="1"/>
</dbReference>
<dbReference type="Pfam" id="PF17956">
    <property type="entry name" value="NAPRTase_C"/>
    <property type="match status" value="1"/>
</dbReference>
<dbReference type="Pfam" id="PF17767">
    <property type="entry name" value="NAPRTase_N"/>
    <property type="match status" value="1"/>
</dbReference>
<dbReference type="PIRSF" id="PIRSF000484">
    <property type="entry name" value="NAPRT"/>
    <property type="match status" value="1"/>
</dbReference>
<dbReference type="SUPFAM" id="SSF51690">
    <property type="entry name" value="Nicotinate/Quinolinate PRTase C-terminal domain-like"/>
    <property type="match status" value="1"/>
</dbReference>
<dbReference type="SUPFAM" id="SSF54675">
    <property type="entry name" value="Nicotinate/Quinolinate PRTase N-terminal domain-like"/>
    <property type="match status" value="1"/>
</dbReference>
<keyword id="KW-0328">Glycosyltransferase</keyword>
<keyword id="KW-0436">Ligase</keyword>
<keyword id="KW-0460">Magnesium</keyword>
<keyword id="KW-0464">Manganese</keyword>
<keyword id="KW-0479">Metal-binding</keyword>
<keyword id="KW-0597">Phosphoprotein</keyword>
<keyword id="KW-0662">Pyridine nucleotide biosynthesis</keyword>
<keyword id="KW-1185">Reference proteome</keyword>
<keyword id="KW-0808">Transferase</keyword>
<feature type="chain" id="PRO_0000432218" description="Nicotinate phosphoribosyltransferase 2">
    <location>
        <begin position="1"/>
        <end position="557"/>
    </location>
</feature>
<feature type="binding site" evidence="3">
    <location>
        <position position="31"/>
    </location>
    <ligand>
        <name>nicotinate</name>
        <dbReference type="ChEBI" id="CHEBI:32544"/>
    </ligand>
</feature>
<feature type="binding site" evidence="3">
    <location>
        <position position="219"/>
    </location>
    <ligand>
        <name>nicotinate</name>
        <dbReference type="ChEBI" id="CHEBI:32544"/>
    </ligand>
</feature>
<feature type="binding site" evidence="3">
    <location>
        <position position="329"/>
    </location>
    <ligand>
        <name>nicotinate</name>
        <dbReference type="ChEBI" id="CHEBI:32544"/>
    </ligand>
</feature>
<feature type="binding site" evidence="3">
    <location>
        <position position="391"/>
    </location>
    <ligand>
        <name>5-phospho-alpha-D-ribose 1-diphosphate</name>
        <dbReference type="ChEBI" id="CHEBI:58017"/>
    </ligand>
</feature>
<feature type="modified residue" description="Phosphohistidine" evidence="1">
    <location>
        <position position="222"/>
    </location>
</feature>